<organism>
    <name type="scientific">Rhizobium meliloti (strain 1021)</name>
    <name type="common">Ensifer meliloti</name>
    <name type="synonym">Sinorhizobium meliloti</name>
    <dbReference type="NCBI Taxonomy" id="266834"/>
    <lineage>
        <taxon>Bacteria</taxon>
        <taxon>Pseudomonadati</taxon>
        <taxon>Pseudomonadota</taxon>
        <taxon>Alphaproteobacteria</taxon>
        <taxon>Hyphomicrobiales</taxon>
        <taxon>Rhizobiaceae</taxon>
        <taxon>Sinorhizobium/Ensifer group</taxon>
        <taxon>Sinorhizobium</taxon>
    </lineage>
</organism>
<keyword id="KW-0131">Cell cycle</keyword>
<keyword id="KW-0132">Cell division</keyword>
<keyword id="KW-0997">Cell inner membrane</keyword>
<keyword id="KW-1003">Cell membrane</keyword>
<keyword id="KW-0133">Cell shape</keyword>
<keyword id="KW-0961">Cell wall biogenesis/degradation</keyword>
<keyword id="KW-0328">Glycosyltransferase</keyword>
<keyword id="KW-0472">Membrane</keyword>
<keyword id="KW-0573">Peptidoglycan synthesis</keyword>
<keyword id="KW-1185">Reference proteome</keyword>
<keyword id="KW-0808">Transferase</keyword>
<dbReference type="EC" id="2.4.1.227" evidence="1"/>
<dbReference type="EMBL" id="AL591688">
    <property type="protein sequence ID" value="CAC46755.1"/>
    <property type="molecule type" value="Genomic_DNA"/>
</dbReference>
<dbReference type="RefSeq" id="NP_386282.1">
    <property type="nucleotide sequence ID" value="NC_003047.1"/>
</dbReference>
<dbReference type="RefSeq" id="WP_010969747.1">
    <property type="nucleotide sequence ID" value="NC_003047.1"/>
</dbReference>
<dbReference type="SMR" id="Q92NL9"/>
<dbReference type="CAZy" id="GT28">
    <property type="family name" value="Glycosyltransferase Family 28"/>
</dbReference>
<dbReference type="EnsemblBacteria" id="CAC46755">
    <property type="protein sequence ID" value="CAC46755"/>
    <property type="gene ID" value="SMc01866"/>
</dbReference>
<dbReference type="KEGG" id="sme:SMc01866"/>
<dbReference type="PATRIC" id="fig|266834.11.peg.3642"/>
<dbReference type="eggNOG" id="COG0707">
    <property type="taxonomic scope" value="Bacteria"/>
</dbReference>
<dbReference type="HOGENOM" id="CLU_037404_2_1_5"/>
<dbReference type="OrthoDB" id="9808936at2"/>
<dbReference type="UniPathway" id="UPA00219"/>
<dbReference type="Proteomes" id="UP000001976">
    <property type="component" value="Chromosome"/>
</dbReference>
<dbReference type="GO" id="GO:0005886">
    <property type="term" value="C:plasma membrane"/>
    <property type="evidence" value="ECO:0007669"/>
    <property type="project" value="UniProtKB-SubCell"/>
</dbReference>
<dbReference type="GO" id="GO:0051991">
    <property type="term" value="F:UDP-N-acetyl-D-glucosamine:N-acetylmuramoyl-L-alanyl-D-glutamyl-meso-2,6-diaminopimelyl-D-alanyl-D-alanine-diphosphoundecaprenol 4-beta-N-acetylglucosaminlytransferase activity"/>
    <property type="evidence" value="ECO:0007669"/>
    <property type="project" value="RHEA"/>
</dbReference>
<dbReference type="GO" id="GO:0050511">
    <property type="term" value="F:undecaprenyldiphospho-muramoylpentapeptide beta-N-acetylglucosaminyltransferase activity"/>
    <property type="evidence" value="ECO:0007669"/>
    <property type="project" value="UniProtKB-UniRule"/>
</dbReference>
<dbReference type="GO" id="GO:0005975">
    <property type="term" value="P:carbohydrate metabolic process"/>
    <property type="evidence" value="ECO:0007669"/>
    <property type="project" value="InterPro"/>
</dbReference>
<dbReference type="GO" id="GO:0051301">
    <property type="term" value="P:cell division"/>
    <property type="evidence" value="ECO:0007669"/>
    <property type="project" value="UniProtKB-KW"/>
</dbReference>
<dbReference type="GO" id="GO:0071555">
    <property type="term" value="P:cell wall organization"/>
    <property type="evidence" value="ECO:0007669"/>
    <property type="project" value="UniProtKB-KW"/>
</dbReference>
<dbReference type="GO" id="GO:0030259">
    <property type="term" value="P:lipid glycosylation"/>
    <property type="evidence" value="ECO:0007669"/>
    <property type="project" value="UniProtKB-UniRule"/>
</dbReference>
<dbReference type="GO" id="GO:0009252">
    <property type="term" value="P:peptidoglycan biosynthetic process"/>
    <property type="evidence" value="ECO:0007669"/>
    <property type="project" value="UniProtKB-UniRule"/>
</dbReference>
<dbReference type="GO" id="GO:0008360">
    <property type="term" value="P:regulation of cell shape"/>
    <property type="evidence" value="ECO:0007669"/>
    <property type="project" value="UniProtKB-KW"/>
</dbReference>
<dbReference type="CDD" id="cd03785">
    <property type="entry name" value="GT28_MurG"/>
    <property type="match status" value="1"/>
</dbReference>
<dbReference type="Gene3D" id="3.40.50.2000">
    <property type="entry name" value="Glycogen Phosphorylase B"/>
    <property type="match status" value="2"/>
</dbReference>
<dbReference type="HAMAP" id="MF_00033">
    <property type="entry name" value="MurG"/>
    <property type="match status" value="1"/>
</dbReference>
<dbReference type="InterPro" id="IPR006009">
    <property type="entry name" value="GlcNAc_MurG"/>
</dbReference>
<dbReference type="InterPro" id="IPR007235">
    <property type="entry name" value="Glyco_trans_28_C"/>
</dbReference>
<dbReference type="InterPro" id="IPR004276">
    <property type="entry name" value="GlycoTrans_28_N"/>
</dbReference>
<dbReference type="NCBIfam" id="TIGR01133">
    <property type="entry name" value="murG"/>
    <property type="match status" value="1"/>
</dbReference>
<dbReference type="PANTHER" id="PTHR21015:SF22">
    <property type="entry name" value="GLYCOSYLTRANSFERASE"/>
    <property type="match status" value="1"/>
</dbReference>
<dbReference type="PANTHER" id="PTHR21015">
    <property type="entry name" value="UDP-N-ACETYLGLUCOSAMINE--N-ACETYLMURAMYL-(PENTAPEPTIDE) PYROPHOSPHORYL-UNDECAPRENOL N-ACETYLGLUCOSAMINE TRANSFERASE 1"/>
    <property type="match status" value="1"/>
</dbReference>
<dbReference type="Pfam" id="PF04101">
    <property type="entry name" value="Glyco_tran_28_C"/>
    <property type="match status" value="1"/>
</dbReference>
<dbReference type="Pfam" id="PF03033">
    <property type="entry name" value="Glyco_transf_28"/>
    <property type="match status" value="1"/>
</dbReference>
<dbReference type="SUPFAM" id="SSF53756">
    <property type="entry name" value="UDP-Glycosyltransferase/glycogen phosphorylase"/>
    <property type="match status" value="1"/>
</dbReference>
<gene>
    <name evidence="1" type="primary">murG</name>
    <name type="ordered locus">R02176</name>
    <name type="ORF">SMc01866</name>
</gene>
<name>MURG_RHIME</name>
<comment type="function">
    <text evidence="1">Cell wall formation. Catalyzes the transfer of a GlcNAc subunit on undecaprenyl-pyrophosphoryl-MurNAc-pentapeptide (lipid intermediate I) to form undecaprenyl-pyrophosphoryl-MurNAc-(pentapeptide)GlcNAc (lipid intermediate II).</text>
</comment>
<comment type="catalytic activity">
    <reaction evidence="1">
        <text>di-trans,octa-cis-undecaprenyl diphospho-N-acetyl-alpha-D-muramoyl-L-alanyl-D-glutamyl-meso-2,6-diaminopimeloyl-D-alanyl-D-alanine + UDP-N-acetyl-alpha-D-glucosamine = di-trans,octa-cis-undecaprenyl diphospho-[N-acetyl-alpha-D-glucosaminyl-(1-&gt;4)]-N-acetyl-alpha-D-muramoyl-L-alanyl-D-glutamyl-meso-2,6-diaminopimeloyl-D-alanyl-D-alanine + UDP + H(+)</text>
        <dbReference type="Rhea" id="RHEA:31227"/>
        <dbReference type="ChEBI" id="CHEBI:15378"/>
        <dbReference type="ChEBI" id="CHEBI:57705"/>
        <dbReference type="ChEBI" id="CHEBI:58223"/>
        <dbReference type="ChEBI" id="CHEBI:61387"/>
        <dbReference type="ChEBI" id="CHEBI:61388"/>
        <dbReference type="EC" id="2.4.1.227"/>
    </reaction>
</comment>
<comment type="pathway">
    <text evidence="1">Cell wall biogenesis; peptidoglycan biosynthesis.</text>
</comment>
<comment type="subcellular location">
    <subcellularLocation>
        <location evidence="1">Cell inner membrane</location>
        <topology evidence="1">Peripheral membrane protein</topology>
        <orientation evidence="1">Cytoplasmic side</orientation>
    </subcellularLocation>
</comment>
<comment type="similarity">
    <text evidence="1">Belongs to the glycosyltransferase 28 family. MurG subfamily.</text>
</comment>
<reference key="1">
    <citation type="journal article" date="2001" name="Proc. Natl. Acad. Sci. U.S.A.">
        <title>Analysis of the chromosome sequence of the legume symbiont Sinorhizobium meliloti strain 1021.</title>
        <authorList>
            <person name="Capela D."/>
            <person name="Barloy-Hubler F."/>
            <person name="Gouzy J."/>
            <person name="Bothe G."/>
            <person name="Ampe F."/>
            <person name="Batut J."/>
            <person name="Boistard P."/>
            <person name="Becker A."/>
            <person name="Boutry M."/>
            <person name="Cadieu E."/>
            <person name="Dreano S."/>
            <person name="Gloux S."/>
            <person name="Godrie T."/>
            <person name="Goffeau A."/>
            <person name="Kahn D."/>
            <person name="Kiss E."/>
            <person name="Lelaure V."/>
            <person name="Masuy D."/>
            <person name="Pohl T."/>
            <person name="Portetelle D."/>
            <person name="Puehler A."/>
            <person name="Purnelle B."/>
            <person name="Ramsperger U."/>
            <person name="Renard C."/>
            <person name="Thebault P."/>
            <person name="Vandenbol M."/>
            <person name="Weidner S."/>
            <person name="Galibert F."/>
        </authorList>
    </citation>
    <scope>NUCLEOTIDE SEQUENCE [LARGE SCALE GENOMIC DNA]</scope>
    <source>
        <strain>1021</strain>
    </source>
</reference>
<reference key="2">
    <citation type="journal article" date="2001" name="Science">
        <title>The composite genome of the legume symbiont Sinorhizobium meliloti.</title>
        <authorList>
            <person name="Galibert F."/>
            <person name="Finan T.M."/>
            <person name="Long S.R."/>
            <person name="Puehler A."/>
            <person name="Abola P."/>
            <person name="Ampe F."/>
            <person name="Barloy-Hubler F."/>
            <person name="Barnett M.J."/>
            <person name="Becker A."/>
            <person name="Boistard P."/>
            <person name="Bothe G."/>
            <person name="Boutry M."/>
            <person name="Bowser L."/>
            <person name="Buhrmester J."/>
            <person name="Cadieu E."/>
            <person name="Capela D."/>
            <person name="Chain P."/>
            <person name="Cowie A."/>
            <person name="Davis R.W."/>
            <person name="Dreano S."/>
            <person name="Federspiel N.A."/>
            <person name="Fisher R.F."/>
            <person name="Gloux S."/>
            <person name="Godrie T."/>
            <person name="Goffeau A."/>
            <person name="Golding B."/>
            <person name="Gouzy J."/>
            <person name="Gurjal M."/>
            <person name="Hernandez-Lucas I."/>
            <person name="Hong A."/>
            <person name="Huizar L."/>
            <person name="Hyman R.W."/>
            <person name="Jones T."/>
            <person name="Kahn D."/>
            <person name="Kahn M.L."/>
            <person name="Kalman S."/>
            <person name="Keating D.H."/>
            <person name="Kiss E."/>
            <person name="Komp C."/>
            <person name="Lelaure V."/>
            <person name="Masuy D."/>
            <person name="Palm C."/>
            <person name="Peck M.C."/>
            <person name="Pohl T.M."/>
            <person name="Portetelle D."/>
            <person name="Purnelle B."/>
            <person name="Ramsperger U."/>
            <person name="Surzycki R."/>
            <person name="Thebault P."/>
            <person name="Vandenbol M."/>
            <person name="Vorhoelter F.J."/>
            <person name="Weidner S."/>
            <person name="Wells D.H."/>
            <person name="Wong K."/>
            <person name="Yeh K.-C."/>
            <person name="Batut J."/>
        </authorList>
    </citation>
    <scope>NUCLEOTIDE SEQUENCE [LARGE SCALE GENOMIC DNA]</scope>
    <source>
        <strain>1021</strain>
    </source>
</reference>
<feature type="chain" id="PRO_0000109202" description="UDP-N-acetylglucosamine--N-acetylmuramyl-(pentapeptide) pyrophosphoryl-undecaprenol N-acetylglucosamine transferase">
    <location>
        <begin position="1"/>
        <end position="374"/>
    </location>
</feature>
<feature type="binding site" evidence="1">
    <location>
        <begin position="13"/>
        <end position="15"/>
    </location>
    <ligand>
        <name>UDP-N-acetyl-alpha-D-glucosamine</name>
        <dbReference type="ChEBI" id="CHEBI:57705"/>
    </ligand>
</feature>
<feature type="binding site" evidence="1">
    <location>
        <position position="124"/>
    </location>
    <ligand>
        <name>UDP-N-acetyl-alpha-D-glucosamine</name>
        <dbReference type="ChEBI" id="CHEBI:57705"/>
    </ligand>
</feature>
<feature type="binding site" evidence="1">
    <location>
        <position position="165"/>
    </location>
    <ligand>
        <name>UDP-N-acetyl-alpha-D-glucosamine</name>
        <dbReference type="ChEBI" id="CHEBI:57705"/>
    </ligand>
</feature>
<feature type="binding site" evidence="1">
    <location>
        <position position="193"/>
    </location>
    <ligand>
        <name>UDP-N-acetyl-alpha-D-glucosamine</name>
        <dbReference type="ChEBI" id="CHEBI:57705"/>
    </ligand>
</feature>
<feature type="binding site" evidence="1">
    <location>
        <position position="294"/>
    </location>
    <ligand>
        <name>UDP-N-acetyl-alpha-D-glucosamine</name>
        <dbReference type="ChEBI" id="CHEBI:57705"/>
    </ligand>
</feature>
<sequence length="374" mass="38771">MDKGIILLAAGGTGGHLFPAEALAHELKATGYSVHLVTDSRAERFTGKFPADEIHVVPSATIGSKNPVKLARSVWKLWTGLRAARRLIARLKPRAVVGFGGYPTVPPLLAATGMGIPSIIHEQNAVMGRANKMLASRVKAVAGGFLPEGTGAFAAKTVATGNPVRPAVLKAAGVPYAPAAGDAPFHLVVFGGSQGAQFFSKAVPQAVCRLDDALRQRLKVTQQARPEDREGVIAVYEKLGVPAEVSPFFTDMAGRIASAQLLICRSGASTVSEISVIGRPAILVPYPYALDHDQAANAAALAAKGGARVIAQVELSAERLAGILADAMSNPDALAQMAAGARQTGKPDAARLLALLVEAIASGSTVAKFKETRS</sequence>
<proteinExistence type="inferred from homology"/>
<evidence type="ECO:0000255" key="1">
    <source>
        <dbReference type="HAMAP-Rule" id="MF_00033"/>
    </source>
</evidence>
<protein>
    <recommendedName>
        <fullName evidence="1">UDP-N-acetylglucosamine--N-acetylmuramyl-(pentapeptide) pyrophosphoryl-undecaprenol N-acetylglucosamine transferase</fullName>
        <ecNumber evidence="1">2.4.1.227</ecNumber>
    </recommendedName>
    <alternativeName>
        <fullName evidence="1">Undecaprenyl-PP-MurNAc-pentapeptide-UDPGlcNAc GlcNAc transferase</fullName>
    </alternativeName>
</protein>
<accession>Q92NL9</accession>